<feature type="chain" id="PRO_1000008519" description="Holo-[acyl-carrier-protein] synthase">
    <location>
        <begin position="1"/>
        <end position="119"/>
    </location>
</feature>
<feature type="binding site" evidence="1">
    <location>
        <position position="6"/>
    </location>
    <ligand>
        <name>Mg(2+)</name>
        <dbReference type="ChEBI" id="CHEBI:18420"/>
    </ligand>
</feature>
<feature type="binding site" evidence="1">
    <location>
        <position position="51"/>
    </location>
    <ligand>
        <name>Mg(2+)</name>
        <dbReference type="ChEBI" id="CHEBI:18420"/>
    </ligand>
</feature>
<gene>
    <name evidence="1" type="primary">acpS</name>
    <name type="ordered locus">SUN_0595</name>
</gene>
<dbReference type="EC" id="2.7.8.7" evidence="1"/>
<dbReference type="EMBL" id="AP009179">
    <property type="protein sequence ID" value="BAF71554.1"/>
    <property type="molecule type" value="Genomic_DNA"/>
</dbReference>
<dbReference type="RefSeq" id="WP_011980287.1">
    <property type="nucleotide sequence ID" value="NC_009663.1"/>
</dbReference>
<dbReference type="SMR" id="A6Q7U5"/>
<dbReference type="STRING" id="387093.SUN_0595"/>
<dbReference type="KEGG" id="sun:SUN_0595"/>
<dbReference type="eggNOG" id="COG0736">
    <property type="taxonomic scope" value="Bacteria"/>
</dbReference>
<dbReference type="HOGENOM" id="CLU_089696_0_2_7"/>
<dbReference type="OrthoDB" id="517356at2"/>
<dbReference type="Proteomes" id="UP000006378">
    <property type="component" value="Chromosome"/>
</dbReference>
<dbReference type="GO" id="GO:0005737">
    <property type="term" value="C:cytoplasm"/>
    <property type="evidence" value="ECO:0007669"/>
    <property type="project" value="UniProtKB-SubCell"/>
</dbReference>
<dbReference type="GO" id="GO:0008897">
    <property type="term" value="F:holo-[acyl-carrier-protein] synthase activity"/>
    <property type="evidence" value="ECO:0007669"/>
    <property type="project" value="UniProtKB-UniRule"/>
</dbReference>
<dbReference type="GO" id="GO:0000287">
    <property type="term" value="F:magnesium ion binding"/>
    <property type="evidence" value="ECO:0007669"/>
    <property type="project" value="UniProtKB-UniRule"/>
</dbReference>
<dbReference type="GO" id="GO:0006633">
    <property type="term" value="P:fatty acid biosynthetic process"/>
    <property type="evidence" value="ECO:0007669"/>
    <property type="project" value="UniProtKB-UniRule"/>
</dbReference>
<dbReference type="Gene3D" id="3.90.470.20">
    <property type="entry name" value="4'-phosphopantetheinyl transferase domain"/>
    <property type="match status" value="1"/>
</dbReference>
<dbReference type="HAMAP" id="MF_00101">
    <property type="entry name" value="AcpS"/>
    <property type="match status" value="1"/>
</dbReference>
<dbReference type="InterPro" id="IPR008278">
    <property type="entry name" value="4-PPantetheinyl_Trfase_dom"/>
</dbReference>
<dbReference type="InterPro" id="IPR037143">
    <property type="entry name" value="4-PPantetheinyl_Trfase_dom_sf"/>
</dbReference>
<dbReference type="InterPro" id="IPR002582">
    <property type="entry name" value="ACPS"/>
</dbReference>
<dbReference type="InterPro" id="IPR004568">
    <property type="entry name" value="Ppantetheine-prot_Trfase_dom"/>
</dbReference>
<dbReference type="NCBIfam" id="TIGR00516">
    <property type="entry name" value="acpS"/>
    <property type="match status" value="1"/>
</dbReference>
<dbReference type="NCBIfam" id="TIGR00556">
    <property type="entry name" value="pantethn_trn"/>
    <property type="match status" value="1"/>
</dbReference>
<dbReference type="Pfam" id="PF01648">
    <property type="entry name" value="ACPS"/>
    <property type="match status" value="1"/>
</dbReference>
<dbReference type="SUPFAM" id="SSF56214">
    <property type="entry name" value="4'-phosphopantetheinyl transferase"/>
    <property type="match status" value="1"/>
</dbReference>
<proteinExistence type="inferred from homology"/>
<protein>
    <recommendedName>
        <fullName evidence="1">Holo-[acyl-carrier-protein] synthase</fullName>
        <shortName evidence="1">Holo-ACP synthase</shortName>
        <ecNumber evidence="1">2.7.8.7</ecNumber>
    </recommendedName>
    <alternativeName>
        <fullName evidence="1">4'-phosphopantetheinyl transferase AcpS</fullName>
    </alternativeName>
</protein>
<keyword id="KW-0963">Cytoplasm</keyword>
<keyword id="KW-0275">Fatty acid biosynthesis</keyword>
<keyword id="KW-0276">Fatty acid metabolism</keyword>
<keyword id="KW-0444">Lipid biosynthesis</keyword>
<keyword id="KW-0443">Lipid metabolism</keyword>
<keyword id="KW-0460">Magnesium</keyword>
<keyword id="KW-0479">Metal-binding</keyword>
<keyword id="KW-0808">Transferase</keyword>
<organism>
    <name type="scientific">Sulfurovum sp. (strain NBC37-1)</name>
    <dbReference type="NCBI Taxonomy" id="387093"/>
    <lineage>
        <taxon>Bacteria</taxon>
        <taxon>Pseudomonadati</taxon>
        <taxon>Campylobacterota</taxon>
        <taxon>Epsilonproteobacteria</taxon>
        <taxon>Campylobacterales</taxon>
        <taxon>Sulfurovaceae</taxon>
        <taxon>Sulfurovum</taxon>
    </lineage>
</organism>
<sequence>MKVGTDIIQIDRIEKLIDRYGDTFKQRYLSKEEIAAAKKVETLAGYWAAKEAIAKAFGCGIGAQLAFHDIMIAKDSRGAPYFTLSDEALKTYTIHSASISISHDGGFAIAVAAIDFEAA</sequence>
<name>ACPS_SULNB</name>
<comment type="function">
    <text evidence="1">Transfers the 4'-phosphopantetheine moiety from coenzyme A to a Ser of acyl-carrier-protein.</text>
</comment>
<comment type="catalytic activity">
    <reaction evidence="1">
        <text>apo-[ACP] + CoA = holo-[ACP] + adenosine 3',5'-bisphosphate + H(+)</text>
        <dbReference type="Rhea" id="RHEA:12068"/>
        <dbReference type="Rhea" id="RHEA-COMP:9685"/>
        <dbReference type="Rhea" id="RHEA-COMP:9690"/>
        <dbReference type="ChEBI" id="CHEBI:15378"/>
        <dbReference type="ChEBI" id="CHEBI:29999"/>
        <dbReference type="ChEBI" id="CHEBI:57287"/>
        <dbReference type="ChEBI" id="CHEBI:58343"/>
        <dbReference type="ChEBI" id="CHEBI:64479"/>
        <dbReference type="EC" id="2.7.8.7"/>
    </reaction>
</comment>
<comment type="cofactor">
    <cofactor evidence="1">
        <name>Mg(2+)</name>
        <dbReference type="ChEBI" id="CHEBI:18420"/>
    </cofactor>
</comment>
<comment type="subcellular location">
    <subcellularLocation>
        <location evidence="1">Cytoplasm</location>
    </subcellularLocation>
</comment>
<comment type="similarity">
    <text evidence="1">Belongs to the P-Pant transferase superfamily. AcpS family.</text>
</comment>
<accession>A6Q7U5</accession>
<reference key="1">
    <citation type="journal article" date="2007" name="Proc. Natl. Acad. Sci. U.S.A.">
        <title>Deep-sea vent epsilon-proteobacterial genomes provide insights into emergence of pathogens.</title>
        <authorList>
            <person name="Nakagawa S."/>
            <person name="Takaki Y."/>
            <person name="Shimamura S."/>
            <person name="Reysenbach A.-L."/>
            <person name="Takai K."/>
            <person name="Horikoshi K."/>
        </authorList>
    </citation>
    <scope>NUCLEOTIDE SEQUENCE [LARGE SCALE GENOMIC DNA]</scope>
    <source>
        <strain>NBC37-1</strain>
    </source>
</reference>
<evidence type="ECO:0000255" key="1">
    <source>
        <dbReference type="HAMAP-Rule" id="MF_00101"/>
    </source>
</evidence>